<accession>Q07MN9</accession>
<sequence length="158" mass="17390">MSDTLQSLDQLGSLKVSAPDAPQHLKKVDKFNRAYATGKRKDAVARVWIKPGAGKVIVNTREVEVYFARPVLRMMIQQPLVAAARAGQYDVICTVAGGGLSGQAGAVRHGISKALTYFEPELRGVLKKGGFLTRDSRVVERKKYGKAKARRSFQFSKR</sequence>
<comment type="similarity">
    <text evidence="1">Belongs to the universal ribosomal protein uS9 family.</text>
</comment>
<keyword id="KW-0687">Ribonucleoprotein</keyword>
<keyword id="KW-0689">Ribosomal protein</keyword>
<feature type="chain" id="PRO_1000051307" description="Small ribosomal subunit protein uS9">
    <location>
        <begin position="1"/>
        <end position="158"/>
    </location>
</feature>
<dbReference type="EMBL" id="CP000463">
    <property type="protein sequence ID" value="ABJ06795.1"/>
    <property type="molecule type" value="Genomic_DNA"/>
</dbReference>
<dbReference type="SMR" id="Q07MN9"/>
<dbReference type="STRING" id="316055.RPE_2858"/>
<dbReference type="KEGG" id="rpe:RPE_2858"/>
<dbReference type="eggNOG" id="COG0103">
    <property type="taxonomic scope" value="Bacteria"/>
</dbReference>
<dbReference type="HOGENOM" id="CLU_046483_2_0_5"/>
<dbReference type="OrthoDB" id="9803965at2"/>
<dbReference type="GO" id="GO:0022627">
    <property type="term" value="C:cytosolic small ribosomal subunit"/>
    <property type="evidence" value="ECO:0007669"/>
    <property type="project" value="TreeGrafter"/>
</dbReference>
<dbReference type="GO" id="GO:0003723">
    <property type="term" value="F:RNA binding"/>
    <property type="evidence" value="ECO:0007669"/>
    <property type="project" value="TreeGrafter"/>
</dbReference>
<dbReference type="GO" id="GO:0003735">
    <property type="term" value="F:structural constituent of ribosome"/>
    <property type="evidence" value="ECO:0007669"/>
    <property type="project" value="InterPro"/>
</dbReference>
<dbReference type="GO" id="GO:0006412">
    <property type="term" value="P:translation"/>
    <property type="evidence" value="ECO:0007669"/>
    <property type="project" value="UniProtKB-UniRule"/>
</dbReference>
<dbReference type="FunFam" id="3.30.230.10:FF:000034">
    <property type="entry name" value="30S ribosomal protein S9"/>
    <property type="match status" value="1"/>
</dbReference>
<dbReference type="Gene3D" id="3.30.230.10">
    <property type="match status" value="1"/>
</dbReference>
<dbReference type="HAMAP" id="MF_00532_B">
    <property type="entry name" value="Ribosomal_uS9_B"/>
    <property type="match status" value="1"/>
</dbReference>
<dbReference type="InterPro" id="IPR020568">
    <property type="entry name" value="Ribosomal_Su5_D2-typ_SF"/>
</dbReference>
<dbReference type="InterPro" id="IPR000754">
    <property type="entry name" value="Ribosomal_uS9"/>
</dbReference>
<dbReference type="InterPro" id="IPR023035">
    <property type="entry name" value="Ribosomal_uS9_bac/plastid"/>
</dbReference>
<dbReference type="InterPro" id="IPR020574">
    <property type="entry name" value="Ribosomal_uS9_CS"/>
</dbReference>
<dbReference type="InterPro" id="IPR014721">
    <property type="entry name" value="Ribsml_uS5_D2-typ_fold_subgr"/>
</dbReference>
<dbReference type="NCBIfam" id="NF001099">
    <property type="entry name" value="PRK00132.1"/>
    <property type="match status" value="1"/>
</dbReference>
<dbReference type="PANTHER" id="PTHR21569">
    <property type="entry name" value="RIBOSOMAL PROTEIN S9"/>
    <property type="match status" value="1"/>
</dbReference>
<dbReference type="PANTHER" id="PTHR21569:SF1">
    <property type="entry name" value="SMALL RIBOSOMAL SUBUNIT PROTEIN US9M"/>
    <property type="match status" value="1"/>
</dbReference>
<dbReference type="Pfam" id="PF00380">
    <property type="entry name" value="Ribosomal_S9"/>
    <property type="match status" value="1"/>
</dbReference>
<dbReference type="SUPFAM" id="SSF54211">
    <property type="entry name" value="Ribosomal protein S5 domain 2-like"/>
    <property type="match status" value="1"/>
</dbReference>
<dbReference type="PROSITE" id="PS00360">
    <property type="entry name" value="RIBOSOMAL_S9"/>
    <property type="match status" value="1"/>
</dbReference>
<protein>
    <recommendedName>
        <fullName evidence="1">Small ribosomal subunit protein uS9</fullName>
    </recommendedName>
    <alternativeName>
        <fullName evidence="2">30S ribosomal protein S9</fullName>
    </alternativeName>
</protein>
<name>RS9_RHOP5</name>
<gene>
    <name evidence="1" type="primary">rpsI</name>
    <name type="ordered locus">RPE_2858</name>
</gene>
<reference key="1">
    <citation type="submission" date="2006-09" db="EMBL/GenBank/DDBJ databases">
        <title>Complete sequence of Rhodopseudomonas palustris BisA53.</title>
        <authorList>
            <consortium name="US DOE Joint Genome Institute"/>
            <person name="Copeland A."/>
            <person name="Lucas S."/>
            <person name="Lapidus A."/>
            <person name="Barry K."/>
            <person name="Detter J.C."/>
            <person name="Glavina del Rio T."/>
            <person name="Hammon N."/>
            <person name="Israni S."/>
            <person name="Dalin E."/>
            <person name="Tice H."/>
            <person name="Pitluck S."/>
            <person name="Chain P."/>
            <person name="Malfatti S."/>
            <person name="Shin M."/>
            <person name="Vergez L."/>
            <person name="Schmutz J."/>
            <person name="Larimer F."/>
            <person name="Land M."/>
            <person name="Hauser L."/>
            <person name="Pelletier D.A."/>
            <person name="Kyrpides N."/>
            <person name="Kim E."/>
            <person name="Harwood C.S."/>
            <person name="Oda Y."/>
            <person name="Richardson P."/>
        </authorList>
    </citation>
    <scope>NUCLEOTIDE SEQUENCE [LARGE SCALE GENOMIC DNA]</scope>
    <source>
        <strain>BisA53</strain>
    </source>
</reference>
<organism>
    <name type="scientific">Rhodopseudomonas palustris (strain BisA53)</name>
    <dbReference type="NCBI Taxonomy" id="316055"/>
    <lineage>
        <taxon>Bacteria</taxon>
        <taxon>Pseudomonadati</taxon>
        <taxon>Pseudomonadota</taxon>
        <taxon>Alphaproteobacteria</taxon>
        <taxon>Hyphomicrobiales</taxon>
        <taxon>Nitrobacteraceae</taxon>
        <taxon>Rhodopseudomonas</taxon>
    </lineage>
</organism>
<evidence type="ECO:0000255" key="1">
    <source>
        <dbReference type="HAMAP-Rule" id="MF_00532"/>
    </source>
</evidence>
<evidence type="ECO:0000305" key="2"/>
<proteinExistence type="inferred from homology"/>